<accession>A1VLH1</accession>
<sequence>MSAIVDIVGREILDSRGNPTVECDVLLESGVMGRAAVPSGASTGSREAIELRDGDKSRYLGKGVLKAVGYINNEISEAVLGLDASEQAFLDRTLIELDGTENKSRLGANAMLAVSMAVARAAAEEAGLPLYRYFGGMAAVQMPVPMMNVINGGEHANNNLDLQELMIIPLGAPSFREALRYGAEVFHALKKILHDKGISTAVGDEGGFAPNVPGGHEAAIQMILEAIDKAGYVAGEQIALGLDCAASEFYKDGKYELSGEGLSLSAQEWTDMLATWVDKYPIISIEDGMAEGDWDGWKILTDRLGKNVQIVGDDLFVTNTKILKEGIDKGIANSILIKINQIGTLTETFAAIEMAKRAGYTAVISHRSGETEDSTIADIAVGTNAGQIKTGSLSRSDRMAKYNQLLRIEEDLGEVASYPGRSAFYNLR</sequence>
<feature type="chain" id="PRO_1000019232" description="Enolase">
    <location>
        <begin position="1"/>
        <end position="428"/>
    </location>
</feature>
<feature type="active site" description="Proton donor" evidence="1">
    <location>
        <position position="205"/>
    </location>
</feature>
<feature type="active site" description="Proton acceptor" evidence="1">
    <location>
        <position position="338"/>
    </location>
</feature>
<feature type="binding site" evidence="1">
    <location>
        <position position="163"/>
    </location>
    <ligand>
        <name>(2R)-2-phosphoglycerate</name>
        <dbReference type="ChEBI" id="CHEBI:58289"/>
    </ligand>
</feature>
<feature type="binding site" evidence="1">
    <location>
        <position position="243"/>
    </location>
    <ligand>
        <name>Mg(2+)</name>
        <dbReference type="ChEBI" id="CHEBI:18420"/>
    </ligand>
</feature>
<feature type="binding site" evidence="1">
    <location>
        <position position="286"/>
    </location>
    <ligand>
        <name>Mg(2+)</name>
        <dbReference type="ChEBI" id="CHEBI:18420"/>
    </ligand>
</feature>
<feature type="binding site" evidence="1">
    <location>
        <position position="313"/>
    </location>
    <ligand>
        <name>Mg(2+)</name>
        <dbReference type="ChEBI" id="CHEBI:18420"/>
    </ligand>
</feature>
<feature type="binding site" evidence="1">
    <location>
        <position position="338"/>
    </location>
    <ligand>
        <name>(2R)-2-phosphoglycerate</name>
        <dbReference type="ChEBI" id="CHEBI:58289"/>
    </ligand>
</feature>
<feature type="binding site" evidence="1">
    <location>
        <position position="367"/>
    </location>
    <ligand>
        <name>(2R)-2-phosphoglycerate</name>
        <dbReference type="ChEBI" id="CHEBI:58289"/>
    </ligand>
</feature>
<feature type="binding site" evidence="1">
    <location>
        <position position="368"/>
    </location>
    <ligand>
        <name>(2R)-2-phosphoglycerate</name>
        <dbReference type="ChEBI" id="CHEBI:58289"/>
    </ligand>
</feature>
<feature type="binding site" evidence="1">
    <location>
        <position position="389"/>
    </location>
    <ligand>
        <name>(2R)-2-phosphoglycerate</name>
        <dbReference type="ChEBI" id="CHEBI:58289"/>
    </ligand>
</feature>
<reference key="1">
    <citation type="journal article" date="2009" name="Environ. Microbiol.">
        <title>The genome of Polaromonas naphthalenivorans strain CJ2, isolated from coal tar-contaminated sediment, reveals physiological and metabolic versatility and evolution through extensive horizontal gene transfer.</title>
        <authorList>
            <person name="Yagi J.M."/>
            <person name="Sims D."/>
            <person name="Brettin T."/>
            <person name="Bruce D."/>
            <person name="Madsen E.L."/>
        </authorList>
    </citation>
    <scope>NUCLEOTIDE SEQUENCE [LARGE SCALE GENOMIC DNA]</scope>
    <source>
        <strain>CJ2</strain>
    </source>
</reference>
<organism>
    <name type="scientific">Polaromonas naphthalenivorans (strain CJ2)</name>
    <dbReference type="NCBI Taxonomy" id="365044"/>
    <lineage>
        <taxon>Bacteria</taxon>
        <taxon>Pseudomonadati</taxon>
        <taxon>Pseudomonadota</taxon>
        <taxon>Betaproteobacteria</taxon>
        <taxon>Burkholderiales</taxon>
        <taxon>Comamonadaceae</taxon>
        <taxon>Polaromonas</taxon>
    </lineage>
</organism>
<dbReference type="EC" id="4.2.1.11" evidence="1"/>
<dbReference type="EMBL" id="CP000529">
    <property type="protein sequence ID" value="ABM36499.1"/>
    <property type="molecule type" value="Genomic_DNA"/>
</dbReference>
<dbReference type="RefSeq" id="WP_011800592.1">
    <property type="nucleotide sequence ID" value="NC_008781.1"/>
</dbReference>
<dbReference type="SMR" id="A1VLH1"/>
<dbReference type="STRING" id="365044.Pnap_1183"/>
<dbReference type="KEGG" id="pna:Pnap_1183"/>
<dbReference type="eggNOG" id="COG0148">
    <property type="taxonomic scope" value="Bacteria"/>
</dbReference>
<dbReference type="HOGENOM" id="CLU_031223_2_1_4"/>
<dbReference type="OrthoDB" id="9804716at2"/>
<dbReference type="UniPathway" id="UPA00109">
    <property type="reaction ID" value="UER00187"/>
</dbReference>
<dbReference type="Proteomes" id="UP000000644">
    <property type="component" value="Chromosome"/>
</dbReference>
<dbReference type="GO" id="GO:0009986">
    <property type="term" value="C:cell surface"/>
    <property type="evidence" value="ECO:0007669"/>
    <property type="project" value="UniProtKB-SubCell"/>
</dbReference>
<dbReference type="GO" id="GO:0005576">
    <property type="term" value="C:extracellular region"/>
    <property type="evidence" value="ECO:0007669"/>
    <property type="project" value="UniProtKB-SubCell"/>
</dbReference>
<dbReference type="GO" id="GO:0000015">
    <property type="term" value="C:phosphopyruvate hydratase complex"/>
    <property type="evidence" value="ECO:0007669"/>
    <property type="project" value="InterPro"/>
</dbReference>
<dbReference type="GO" id="GO:0000287">
    <property type="term" value="F:magnesium ion binding"/>
    <property type="evidence" value="ECO:0007669"/>
    <property type="project" value="UniProtKB-UniRule"/>
</dbReference>
<dbReference type="GO" id="GO:0004634">
    <property type="term" value="F:phosphopyruvate hydratase activity"/>
    <property type="evidence" value="ECO:0007669"/>
    <property type="project" value="UniProtKB-UniRule"/>
</dbReference>
<dbReference type="GO" id="GO:0006096">
    <property type="term" value="P:glycolytic process"/>
    <property type="evidence" value="ECO:0007669"/>
    <property type="project" value="UniProtKB-UniRule"/>
</dbReference>
<dbReference type="CDD" id="cd03313">
    <property type="entry name" value="enolase"/>
    <property type="match status" value="1"/>
</dbReference>
<dbReference type="FunFam" id="3.20.20.120:FF:000001">
    <property type="entry name" value="Enolase"/>
    <property type="match status" value="1"/>
</dbReference>
<dbReference type="FunFam" id="3.30.390.10:FF:000001">
    <property type="entry name" value="Enolase"/>
    <property type="match status" value="1"/>
</dbReference>
<dbReference type="Gene3D" id="3.20.20.120">
    <property type="entry name" value="Enolase-like C-terminal domain"/>
    <property type="match status" value="1"/>
</dbReference>
<dbReference type="Gene3D" id="3.30.390.10">
    <property type="entry name" value="Enolase-like, N-terminal domain"/>
    <property type="match status" value="1"/>
</dbReference>
<dbReference type="HAMAP" id="MF_00318">
    <property type="entry name" value="Enolase"/>
    <property type="match status" value="1"/>
</dbReference>
<dbReference type="InterPro" id="IPR000941">
    <property type="entry name" value="Enolase"/>
</dbReference>
<dbReference type="InterPro" id="IPR036849">
    <property type="entry name" value="Enolase-like_C_sf"/>
</dbReference>
<dbReference type="InterPro" id="IPR029017">
    <property type="entry name" value="Enolase-like_N"/>
</dbReference>
<dbReference type="InterPro" id="IPR020810">
    <property type="entry name" value="Enolase_C"/>
</dbReference>
<dbReference type="InterPro" id="IPR020809">
    <property type="entry name" value="Enolase_CS"/>
</dbReference>
<dbReference type="InterPro" id="IPR020811">
    <property type="entry name" value="Enolase_N"/>
</dbReference>
<dbReference type="NCBIfam" id="TIGR01060">
    <property type="entry name" value="eno"/>
    <property type="match status" value="1"/>
</dbReference>
<dbReference type="PANTHER" id="PTHR11902">
    <property type="entry name" value="ENOLASE"/>
    <property type="match status" value="1"/>
</dbReference>
<dbReference type="PANTHER" id="PTHR11902:SF1">
    <property type="entry name" value="ENOLASE"/>
    <property type="match status" value="1"/>
</dbReference>
<dbReference type="Pfam" id="PF00113">
    <property type="entry name" value="Enolase_C"/>
    <property type="match status" value="1"/>
</dbReference>
<dbReference type="Pfam" id="PF03952">
    <property type="entry name" value="Enolase_N"/>
    <property type="match status" value="1"/>
</dbReference>
<dbReference type="PIRSF" id="PIRSF001400">
    <property type="entry name" value="Enolase"/>
    <property type="match status" value="1"/>
</dbReference>
<dbReference type="PRINTS" id="PR00148">
    <property type="entry name" value="ENOLASE"/>
</dbReference>
<dbReference type="SFLD" id="SFLDS00001">
    <property type="entry name" value="Enolase"/>
    <property type="match status" value="1"/>
</dbReference>
<dbReference type="SFLD" id="SFLDF00002">
    <property type="entry name" value="enolase"/>
    <property type="match status" value="1"/>
</dbReference>
<dbReference type="SMART" id="SM01192">
    <property type="entry name" value="Enolase_C"/>
    <property type="match status" value="1"/>
</dbReference>
<dbReference type="SMART" id="SM01193">
    <property type="entry name" value="Enolase_N"/>
    <property type="match status" value="1"/>
</dbReference>
<dbReference type="SUPFAM" id="SSF51604">
    <property type="entry name" value="Enolase C-terminal domain-like"/>
    <property type="match status" value="1"/>
</dbReference>
<dbReference type="SUPFAM" id="SSF54826">
    <property type="entry name" value="Enolase N-terminal domain-like"/>
    <property type="match status" value="1"/>
</dbReference>
<dbReference type="PROSITE" id="PS00164">
    <property type="entry name" value="ENOLASE"/>
    <property type="match status" value="1"/>
</dbReference>
<comment type="function">
    <text evidence="1">Catalyzes the reversible conversion of 2-phosphoglycerate (2-PG) into phosphoenolpyruvate (PEP). It is essential for the degradation of carbohydrates via glycolysis.</text>
</comment>
<comment type="catalytic activity">
    <reaction evidence="1">
        <text>(2R)-2-phosphoglycerate = phosphoenolpyruvate + H2O</text>
        <dbReference type="Rhea" id="RHEA:10164"/>
        <dbReference type="ChEBI" id="CHEBI:15377"/>
        <dbReference type="ChEBI" id="CHEBI:58289"/>
        <dbReference type="ChEBI" id="CHEBI:58702"/>
        <dbReference type="EC" id="4.2.1.11"/>
    </reaction>
</comment>
<comment type="cofactor">
    <cofactor evidence="1">
        <name>Mg(2+)</name>
        <dbReference type="ChEBI" id="CHEBI:18420"/>
    </cofactor>
    <text evidence="1">Binds a second Mg(2+) ion via substrate during catalysis.</text>
</comment>
<comment type="pathway">
    <text evidence="1">Carbohydrate degradation; glycolysis; pyruvate from D-glyceraldehyde 3-phosphate: step 4/5.</text>
</comment>
<comment type="subcellular location">
    <subcellularLocation>
        <location evidence="1">Cytoplasm</location>
    </subcellularLocation>
    <subcellularLocation>
        <location evidence="1">Secreted</location>
    </subcellularLocation>
    <subcellularLocation>
        <location evidence="1">Cell surface</location>
    </subcellularLocation>
    <text evidence="1">Fractions of enolase are present in both the cytoplasm and on the cell surface.</text>
</comment>
<comment type="similarity">
    <text evidence="1">Belongs to the enolase family.</text>
</comment>
<keyword id="KW-0963">Cytoplasm</keyword>
<keyword id="KW-0324">Glycolysis</keyword>
<keyword id="KW-0456">Lyase</keyword>
<keyword id="KW-0460">Magnesium</keyword>
<keyword id="KW-0479">Metal-binding</keyword>
<keyword id="KW-1185">Reference proteome</keyword>
<keyword id="KW-0964">Secreted</keyword>
<protein>
    <recommendedName>
        <fullName evidence="1">Enolase</fullName>
        <ecNumber evidence="1">4.2.1.11</ecNumber>
    </recommendedName>
    <alternativeName>
        <fullName evidence="1">2-phospho-D-glycerate hydro-lyase</fullName>
    </alternativeName>
    <alternativeName>
        <fullName evidence="1">2-phosphoglycerate dehydratase</fullName>
    </alternativeName>
</protein>
<evidence type="ECO:0000255" key="1">
    <source>
        <dbReference type="HAMAP-Rule" id="MF_00318"/>
    </source>
</evidence>
<gene>
    <name evidence="1" type="primary">eno</name>
    <name type="ordered locus">Pnap_1183</name>
</gene>
<name>ENO_POLNA</name>
<proteinExistence type="inferred from homology"/>